<reference key="1">
    <citation type="journal article" date="2002" name="Nucleic Acids Res.">
        <title>Genome sequence of Shigella flexneri 2a: insights into pathogenicity through comparison with genomes of Escherichia coli K12 and O157.</title>
        <authorList>
            <person name="Jin Q."/>
            <person name="Yuan Z."/>
            <person name="Xu J."/>
            <person name="Wang Y."/>
            <person name="Shen Y."/>
            <person name="Lu W."/>
            <person name="Wang J."/>
            <person name="Liu H."/>
            <person name="Yang J."/>
            <person name="Yang F."/>
            <person name="Zhang X."/>
            <person name="Zhang J."/>
            <person name="Yang G."/>
            <person name="Wu H."/>
            <person name="Qu D."/>
            <person name="Dong J."/>
            <person name="Sun L."/>
            <person name="Xue Y."/>
            <person name="Zhao A."/>
            <person name="Gao Y."/>
            <person name="Zhu J."/>
            <person name="Kan B."/>
            <person name="Ding K."/>
            <person name="Chen S."/>
            <person name="Cheng H."/>
            <person name="Yao Z."/>
            <person name="He B."/>
            <person name="Chen R."/>
            <person name="Ma D."/>
            <person name="Qiang B."/>
            <person name="Wen Y."/>
            <person name="Hou Y."/>
            <person name="Yu J."/>
        </authorList>
    </citation>
    <scope>NUCLEOTIDE SEQUENCE [LARGE SCALE GENOMIC DNA]</scope>
    <source>
        <strain>301 / Serotype 2a</strain>
    </source>
</reference>
<reference key="2">
    <citation type="journal article" date="2003" name="Infect. Immun.">
        <title>Complete genome sequence and comparative genomics of Shigella flexneri serotype 2a strain 2457T.</title>
        <authorList>
            <person name="Wei J."/>
            <person name="Goldberg M.B."/>
            <person name="Burland V."/>
            <person name="Venkatesan M.M."/>
            <person name="Deng W."/>
            <person name="Fournier G."/>
            <person name="Mayhew G.F."/>
            <person name="Plunkett G. III"/>
            <person name="Rose D.J."/>
            <person name="Darling A."/>
            <person name="Mau B."/>
            <person name="Perna N.T."/>
            <person name="Payne S.M."/>
            <person name="Runyen-Janecky L.J."/>
            <person name="Zhou S."/>
            <person name="Schwartz D.C."/>
            <person name="Blattner F.R."/>
        </authorList>
    </citation>
    <scope>NUCLEOTIDE SEQUENCE [LARGE SCALE GENOMIC DNA]</scope>
    <source>
        <strain>ATCC 700930 / 2457T / Serotype 2a</strain>
    </source>
</reference>
<evidence type="ECO:0000255" key="1">
    <source>
        <dbReference type="HAMAP-Rule" id="MF_01722"/>
    </source>
</evidence>
<accession>Q83J33</accession>
<accession>Q7BZ04</accession>
<dbReference type="EC" id="7.5.2.10" evidence="1"/>
<dbReference type="EMBL" id="AE005674">
    <property type="protein sequence ID" value="AAN45060.1"/>
    <property type="molecule type" value="Genomic_DNA"/>
</dbReference>
<dbReference type="EMBL" id="AE014073">
    <property type="protein sequence ID" value="AAP19129.1"/>
    <property type="molecule type" value="Genomic_DNA"/>
</dbReference>
<dbReference type="RefSeq" id="NP_709353.1">
    <property type="nucleotide sequence ID" value="NC_004337.2"/>
</dbReference>
<dbReference type="RefSeq" id="WP_001146516.1">
    <property type="nucleotide sequence ID" value="NZ_WPGW01000060.1"/>
</dbReference>
<dbReference type="SMR" id="Q83J33"/>
<dbReference type="STRING" id="198214.SF3611"/>
<dbReference type="PaxDb" id="198214-SF3611"/>
<dbReference type="GeneID" id="1026269"/>
<dbReference type="KEGG" id="sfl:SF3611"/>
<dbReference type="KEGG" id="sfx:S4158"/>
<dbReference type="PATRIC" id="fig|198214.7.peg.4263"/>
<dbReference type="HOGENOM" id="CLU_000604_92_3_6"/>
<dbReference type="Proteomes" id="UP000001006">
    <property type="component" value="Chromosome"/>
</dbReference>
<dbReference type="Proteomes" id="UP000002673">
    <property type="component" value="Chromosome"/>
</dbReference>
<dbReference type="GO" id="GO:0005886">
    <property type="term" value="C:plasma membrane"/>
    <property type="evidence" value="ECO:0007669"/>
    <property type="project" value="UniProtKB-SubCell"/>
</dbReference>
<dbReference type="GO" id="GO:0015614">
    <property type="term" value="F:ABC-type D-xylose transporter activity"/>
    <property type="evidence" value="ECO:0007669"/>
    <property type="project" value="UniProtKB-EC"/>
</dbReference>
<dbReference type="GO" id="GO:0005524">
    <property type="term" value="F:ATP binding"/>
    <property type="evidence" value="ECO:0007669"/>
    <property type="project" value="UniProtKB-KW"/>
</dbReference>
<dbReference type="GO" id="GO:0016887">
    <property type="term" value="F:ATP hydrolysis activity"/>
    <property type="evidence" value="ECO:0007669"/>
    <property type="project" value="InterPro"/>
</dbReference>
<dbReference type="CDD" id="cd03216">
    <property type="entry name" value="ABC_Carb_Monos_I"/>
    <property type="match status" value="1"/>
</dbReference>
<dbReference type="CDD" id="cd03215">
    <property type="entry name" value="ABC_Carb_Monos_II"/>
    <property type="match status" value="1"/>
</dbReference>
<dbReference type="FunFam" id="3.40.50.300:FF:000126">
    <property type="entry name" value="Galactose/methyl galactoside import ATP-binding protein MglA"/>
    <property type="match status" value="1"/>
</dbReference>
<dbReference type="FunFam" id="3.40.50.300:FF:000127">
    <property type="entry name" value="Ribose import ATP-binding protein RbsA"/>
    <property type="match status" value="1"/>
</dbReference>
<dbReference type="Gene3D" id="3.40.50.300">
    <property type="entry name" value="P-loop containing nucleotide triphosphate hydrolases"/>
    <property type="match status" value="2"/>
</dbReference>
<dbReference type="InterPro" id="IPR003593">
    <property type="entry name" value="AAA+_ATPase"/>
</dbReference>
<dbReference type="InterPro" id="IPR050107">
    <property type="entry name" value="ABC_carbohydrate_import_ATPase"/>
</dbReference>
<dbReference type="InterPro" id="IPR003439">
    <property type="entry name" value="ABC_transporter-like_ATP-bd"/>
</dbReference>
<dbReference type="InterPro" id="IPR017871">
    <property type="entry name" value="ABC_transporter-like_CS"/>
</dbReference>
<dbReference type="InterPro" id="IPR013455">
    <property type="entry name" value="ABC_transptr_XylG"/>
</dbReference>
<dbReference type="InterPro" id="IPR027417">
    <property type="entry name" value="P-loop_NTPase"/>
</dbReference>
<dbReference type="NCBIfam" id="NF010069">
    <property type="entry name" value="PRK13549.1"/>
    <property type="match status" value="1"/>
</dbReference>
<dbReference type="NCBIfam" id="TIGR02633">
    <property type="entry name" value="xylG"/>
    <property type="match status" value="1"/>
</dbReference>
<dbReference type="PANTHER" id="PTHR43790">
    <property type="entry name" value="CARBOHYDRATE TRANSPORT ATP-BINDING PROTEIN MG119-RELATED"/>
    <property type="match status" value="1"/>
</dbReference>
<dbReference type="PANTHER" id="PTHR43790:SF1">
    <property type="entry name" value="XYLOSE IMPORT ATP-BINDING PROTEIN XYLG"/>
    <property type="match status" value="1"/>
</dbReference>
<dbReference type="Pfam" id="PF00005">
    <property type="entry name" value="ABC_tran"/>
    <property type="match status" value="2"/>
</dbReference>
<dbReference type="SMART" id="SM00382">
    <property type="entry name" value="AAA"/>
    <property type="match status" value="2"/>
</dbReference>
<dbReference type="SUPFAM" id="SSF52540">
    <property type="entry name" value="P-loop containing nucleoside triphosphate hydrolases"/>
    <property type="match status" value="2"/>
</dbReference>
<dbReference type="PROSITE" id="PS00211">
    <property type="entry name" value="ABC_TRANSPORTER_1"/>
    <property type="match status" value="1"/>
</dbReference>
<dbReference type="PROSITE" id="PS50893">
    <property type="entry name" value="ABC_TRANSPORTER_2"/>
    <property type="match status" value="2"/>
</dbReference>
<dbReference type="PROSITE" id="PS51280">
    <property type="entry name" value="XYLG"/>
    <property type="match status" value="1"/>
</dbReference>
<comment type="function">
    <text evidence="1">Part of the ABC transporter complex XylFGH involved in xylose import. Responsible for energy coupling to the transport system.</text>
</comment>
<comment type="catalytic activity">
    <reaction evidence="1">
        <text>D-xylose(out) + ATP + H2O = D-xylose(in) + ADP + phosphate + H(+)</text>
        <dbReference type="Rhea" id="RHEA:29899"/>
        <dbReference type="ChEBI" id="CHEBI:15377"/>
        <dbReference type="ChEBI" id="CHEBI:15378"/>
        <dbReference type="ChEBI" id="CHEBI:30616"/>
        <dbReference type="ChEBI" id="CHEBI:43474"/>
        <dbReference type="ChEBI" id="CHEBI:53455"/>
        <dbReference type="ChEBI" id="CHEBI:456216"/>
        <dbReference type="EC" id="7.5.2.10"/>
    </reaction>
</comment>
<comment type="subunit">
    <text evidence="1">The complex is composed of two ATP-binding proteins (XylG), two transmembrane proteins (XylH) and a solute-binding protein (XylF).</text>
</comment>
<comment type="subcellular location">
    <subcellularLocation>
        <location evidence="1">Cell inner membrane</location>
        <topology evidence="1">Peripheral membrane protein</topology>
    </subcellularLocation>
</comment>
<comment type="similarity">
    <text evidence="1">Belongs to the ABC transporter superfamily. Xylose importer (TC 3.A.1.2.4) family.</text>
</comment>
<name>XYLG_SHIFL</name>
<gene>
    <name evidence="1" type="primary">xylG</name>
    <name type="ordered locus">SF3611</name>
    <name type="ordered locus">S4158</name>
</gene>
<proteinExistence type="inferred from homology"/>
<keyword id="KW-0067">ATP-binding</keyword>
<keyword id="KW-0997">Cell inner membrane</keyword>
<keyword id="KW-1003">Cell membrane</keyword>
<keyword id="KW-0472">Membrane</keyword>
<keyword id="KW-0547">Nucleotide-binding</keyword>
<keyword id="KW-1185">Reference proteome</keyword>
<keyword id="KW-0677">Repeat</keyword>
<keyword id="KW-0762">Sugar transport</keyword>
<keyword id="KW-1278">Translocase</keyword>
<keyword id="KW-0813">Transport</keyword>
<protein>
    <recommendedName>
        <fullName evidence="1">Xylose import ATP-binding protein XylG</fullName>
        <ecNumber evidence="1">7.5.2.10</ecNumber>
    </recommendedName>
</protein>
<sequence length="513" mass="56602">MPYLLEMKNITKTFGSVKAIDNVSLRLNAGEIVSLCGENGSGKSTLMKVLCGIYPHGSYEGEIIFAGEEIQASHIRDTERKGIAIIHQELALVKELTVLENIFLGNEITHNGIMDYDLMTLRYQKLLAQVSLSISPDTRVGDLGLGQQQLVEIAKALNKQVRLLILDEPTASLTEQETSVLLDIIRDLQQHGIACIYISHKLNEVKAISDTICVIRDGQHIGTRDAAGMSEDDIITMMVERELTAIYPNEPHTTGDEILRIEHLTAWHPVNRHIKRVNDVSFSLKRGEILGIAGLVGAGRTETIQCLFGVWPGQWEGKIYIDGKQVDIRNCQQAITQGIAMVPEDRKRDGIVPVMAVGKNITLAALNKFTGGISQLDDAAEQKCILESIQQLKVKTSSPDLAIGRLSGGNQQKAILARCLLLNPRILILDEPTRGIDIGAKYEIYKLINQLVQQGIAVIVISSELPEVLGLSDRVLVMHEGKLKANLINHNLTQEQVMEAALRSEHHVEKQSV</sequence>
<organism>
    <name type="scientific">Shigella flexneri</name>
    <dbReference type="NCBI Taxonomy" id="623"/>
    <lineage>
        <taxon>Bacteria</taxon>
        <taxon>Pseudomonadati</taxon>
        <taxon>Pseudomonadota</taxon>
        <taxon>Gammaproteobacteria</taxon>
        <taxon>Enterobacterales</taxon>
        <taxon>Enterobacteriaceae</taxon>
        <taxon>Shigella</taxon>
    </lineage>
</organism>
<feature type="chain" id="PRO_0000271515" description="Xylose import ATP-binding protein XylG">
    <location>
        <begin position="1"/>
        <end position="513"/>
    </location>
</feature>
<feature type="domain" description="ABC transporter 1" evidence="1">
    <location>
        <begin position="5"/>
        <end position="242"/>
    </location>
</feature>
<feature type="domain" description="ABC transporter 2" evidence="1">
    <location>
        <begin position="259"/>
        <end position="505"/>
    </location>
</feature>
<feature type="binding site" evidence="1">
    <location>
        <begin position="37"/>
        <end position="44"/>
    </location>
    <ligand>
        <name>ATP</name>
        <dbReference type="ChEBI" id="CHEBI:30616"/>
    </ligand>
</feature>